<organism>
    <name type="scientific">Tetrahymena thermophila</name>
    <dbReference type="NCBI Taxonomy" id="5911"/>
    <lineage>
        <taxon>Eukaryota</taxon>
        <taxon>Sar</taxon>
        <taxon>Alveolata</taxon>
        <taxon>Ciliophora</taxon>
        <taxon>Intramacronucleata</taxon>
        <taxon>Oligohymenophorea</taxon>
        <taxon>Hymenostomatida</taxon>
        <taxon>Tetrahymenina</taxon>
        <taxon>Tetrahymenidae</taxon>
        <taxon>Tetrahymena</taxon>
    </lineage>
</organism>
<feature type="chain" id="PRO_0000128370" description="T-complex protein 1 subunit eta">
    <location>
        <begin position="1" status="less than"/>
        <end position="353" status="greater than"/>
    </location>
</feature>
<feature type="non-terminal residue">
    <location>
        <position position="1"/>
    </location>
</feature>
<feature type="non-terminal residue">
    <location>
        <position position="353"/>
    </location>
</feature>
<reference key="1">
    <citation type="journal article" date="1996" name="FEBS Lett.">
        <title>The Tetrahymena chaperonin subunit CCT eta gene is coexpressed with CCT gamma gene during cilia biogenesis and cell sexual reproduction.</title>
        <authorList>
            <person name="Cyrne L."/>
            <person name="Guerreiro P."/>
            <person name="Cardoso A.C."/>
            <person name="Rodrigues-Pousada C."/>
            <person name="Soares H."/>
        </authorList>
    </citation>
    <scope>NUCLEOTIDE SEQUENCE [GENOMIC DNA]</scope>
    <source>
        <strain>SB1917</strain>
    </source>
</reference>
<accession>P54410</accession>
<dbReference type="EMBL" id="U46028">
    <property type="protein sequence ID" value="AAC47007.1"/>
    <property type="molecule type" value="Genomic_DNA"/>
</dbReference>
<dbReference type="PIR" id="S71338">
    <property type="entry name" value="S71338"/>
</dbReference>
<dbReference type="SMR" id="P54410"/>
<dbReference type="GO" id="GO:0005737">
    <property type="term" value="C:cytoplasm"/>
    <property type="evidence" value="ECO:0007669"/>
    <property type="project" value="UniProtKB-SubCell"/>
</dbReference>
<dbReference type="GO" id="GO:0005524">
    <property type="term" value="F:ATP binding"/>
    <property type="evidence" value="ECO:0007669"/>
    <property type="project" value="UniProtKB-KW"/>
</dbReference>
<dbReference type="GO" id="GO:0016887">
    <property type="term" value="F:ATP hydrolysis activity"/>
    <property type="evidence" value="ECO:0007669"/>
    <property type="project" value="InterPro"/>
</dbReference>
<dbReference type="GO" id="GO:0140662">
    <property type="term" value="F:ATP-dependent protein folding chaperone"/>
    <property type="evidence" value="ECO:0007669"/>
    <property type="project" value="InterPro"/>
</dbReference>
<dbReference type="GO" id="GO:0051082">
    <property type="term" value="F:unfolded protein binding"/>
    <property type="evidence" value="ECO:0007669"/>
    <property type="project" value="InterPro"/>
</dbReference>
<dbReference type="FunFam" id="3.30.260.10:FF:000022">
    <property type="entry name" value="T-complex protein 1 subunit eta"/>
    <property type="match status" value="1"/>
</dbReference>
<dbReference type="FunFam" id="3.50.7.10:FF:000006">
    <property type="entry name" value="T-complex protein 1 subunit eta"/>
    <property type="match status" value="1"/>
</dbReference>
<dbReference type="Gene3D" id="3.50.7.10">
    <property type="entry name" value="GroEL"/>
    <property type="match status" value="1"/>
</dbReference>
<dbReference type="Gene3D" id="1.10.560.10">
    <property type="entry name" value="GroEL-like equatorial domain"/>
    <property type="match status" value="1"/>
</dbReference>
<dbReference type="Gene3D" id="3.30.260.10">
    <property type="entry name" value="TCP-1-like chaperonin intermediate domain"/>
    <property type="match status" value="1"/>
</dbReference>
<dbReference type="InterPro" id="IPR017998">
    <property type="entry name" value="Chaperone_TCP-1"/>
</dbReference>
<dbReference type="InterPro" id="IPR002194">
    <property type="entry name" value="Chaperonin_TCP-1_CS"/>
</dbReference>
<dbReference type="InterPro" id="IPR002423">
    <property type="entry name" value="Cpn60/GroEL/TCP-1"/>
</dbReference>
<dbReference type="InterPro" id="IPR027409">
    <property type="entry name" value="GroEL-like_apical_dom_sf"/>
</dbReference>
<dbReference type="InterPro" id="IPR027413">
    <property type="entry name" value="GROEL-like_equatorial_sf"/>
</dbReference>
<dbReference type="InterPro" id="IPR027410">
    <property type="entry name" value="TCP-1-like_intermed_sf"/>
</dbReference>
<dbReference type="PANTHER" id="PTHR11353">
    <property type="entry name" value="CHAPERONIN"/>
    <property type="match status" value="1"/>
</dbReference>
<dbReference type="Pfam" id="PF00118">
    <property type="entry name" value="Cpn60_TCP1"/>
    <property type="match status" value="1"/>
</dbReference>
<dbReference type="PRINTS" id="PR00304">
    <property type="entry name" value="TCOMPLEXTCP1"/>
</dbReference>
<dbReference type="SUPFAM" id="SSF52029">
    <property type="entry name" value="GroEL apical domain-like"/>
    <property type="match status" value="1"/>
</dbReference>
<dbReference type="SUPFAM" id="SSF48592">
    <property type="entry name" value="GroEL equatorial domain-like"/>
    <property type="match status" value="1"/>
</dbReference>
<dbReference type="SUPFAM" id="SSF54849">
    <property type="entry name" value="GroEL-intermediate domain like"/>
    <property type="match status" value="1"/>
</dbReference>
<dbReference type="PROSITE" id="PS00995">
    <property type="entry name" value="TCP1_3"/>
    <property type="match status" value="1"/>
</dbReference>
<evidence type="ECO:0000305" key="1"/>
<comment type="function">
    <text>Molecular chaperone; assists the folding of proteins upon ATP hydrolysis. Known to play a role, in vitro, in the folding of actin and tubulin.</text>
</comment>
<comment type="subunit">
    <text>Heterooligomeric complex of about 850 to 900 kDa that forms two stacked rings, 12 to 16 nm in diameter.</text>
</comment>
<comment type="subcellular location">
    <subcellularLocation>
        <location>Cytoplasm</location>
    </subcellularLocation>
</comment>
<comment type="similarity">
    <text evidence="1">Belongs to the TCP-1 chaperonin family.</text>
</comment>
<proteinExistence type="inferred from homology"/>
<keyword id="KW-0067">ATP-binding</keyword>
<keyword id="KW-0143">Chaperone</keyword>
<keyword id="KW-0963">Cytoplasm</keyword>
<keyword id="KW-0547">Nucleotide-binding</keyword>
<sequence>NDGATILNLLDIVHPAAKTLVDIAKAQDDEVGDGTTSVCLLAGELLKESKYFIEEGMHPQIITKGYKEALKLALQFLHENAHSVADKNETEKREMLIKCAQTSLNSKLLAHYKEFFSELVVQAVETLETNLLDKDLIGIKMVTGGSVTDSFLVSGVAFKKTFSYAGFEQQPKKFNNPKICLLNIELELKAEKENAEIRIENPDDYKSIVDAEWELIYEKLRKIVESGANIVLSKLPIGDLATQYFADRNIFCAGRVDAEDMKRVQKSTGAIVQTTVNGLTEDVLGTCNQFEEVQIGAERYNLFKDCPHSKSATIILRGGAEQFIAEAERSLNDAIMIVRRCMKANKIVPGGGA</sequence>
<name>TCPH_TETTH</name>
<protein>
    <recommendedName>
        <fullName>T-complex protein 1 subunit eta</fullName>
        <shortName>TCP-1-eta</shortName>
    </recommendedName>
    <alternativeName>
        <fullName>CCT-eta</fullName>
    </alternativeName>
</protein>